<dbReference type="EC" id="3.6.1.23" evidence="1"/>
<dbReference type="EMBL" id="CP000151">
    <property type="protein sequence ID" value="ABB09441.1"/>
    <property type="molecule type" value="Genomic_DNA"/>
</dbReference>
<dbReference type="RefSeq" id="WP_011352963.1">
    <property type="nucleotide sequence ID" value="NC_007510.1"/>
</dbReference>
<dbReference type="SMR" id="Q39DM5"/>
<dbReference type="GeneID" id="45095732"/>
<dbReference type="KEGG" id="bur:Bcep18194_A5847"/>
<dbReference type="PATRIC" id="fig|482957.22.peg.2834"/>
<dbReference type="HOGENOM" id="CLU_068508_1_1_4"/>
<dbReference type="UniPathway" id="UPA00610">
    <property type="reaction ID" value="UER00666"/>
</dbReference>
<dbReference type="Proteomes" id="UP000002705">
    <property type="component" value="Chromosome 1"/>
</dbReference>
<dbReference type="GO" id="GO:0004170">
    <property type="term" value="F:dUTP diphosphatase activity"/>
    <property type="evidence" value="ECO:0007669"/>
    <property type="project" value="UniProtKB-UniRule"/>
</dbReference>
<dbReference type="GO" id="GO:0000287">
    <property type="term" value="F:magnesium ion binding"/>
    <property type="evidence" value="ECO:0007669"/>
    <property type="project" value="UniProtKB-UniRule"/>
</dbReference>
<dbReference type="GO" id="GO:0006226">
    <property type="term" value="P:dUMP biosynthetic process"/>
    <property type="evidence" value="ECO:0007669"/>
    <property type="project" value="UniProtKB-UniRule"/>
</dbReference>
<dbReference type="GO" id="GO:0046081">
    <property type="term" value="P:dUTP catabolic process"/>
    <property type="evidence" value="ECO:0007669"/>
    <property type="project" value="InterPro"/>
</dbReference>
<dbReference type="CDD" id="cd07557">
    <property type="entry name" value="trimeric_dUTPase"/>
    <property type="match status" value="1"/>
</dbReference>
<dbReference type="FunFam" id="2.70.40.10:FF:000002">
    <property type="entry name" value="dUTP diphosphatase"/>
    <property type="match status" value="1"/>
</dbReference>
<dbReference type="Gene3D" id="2.70.40.10">
    <property type="match status" value="1"/>
</dbReference>
<dbReference type="HAMAP" id="MF_00116">
    <property type="entry name" value="dUTPase_bact"/>
    <property type="match status" value="1"/>
</dbReference>
<dbReference type="InterPro" id="IPR008181">
    <property type="entry name" value="dUTPase"/>
</dbReference>
<dbReference type="InterPro" id="IPR029054">
    <property type="entry name" value="dUTPase-like"/>
</dbReference>
<dbReference type="InterPro" id="IPR036157">
    <property type="entry name" value="dUTPase-like_sf"/>
</dbReference>
<dbReference type="InterPro" id="IPR033704">
    <property type="entry name" value="dUTPase_trimeric"/>
</dbReference>
<dbReference type="NCBIfam" id="TIGR00576">
    <property type="entry name" value="dut"/>
    <property type="match status" value="1"/>
</dbReference>
<dbReference type="NCBIfam" id="NF001862">
    <property type="entry name" value="PRK00601.1"/>
    <property type="match status" value="1"/>
</dbReference>
<dbReference type="PANTHER" id="PTHR11241">
    <property type="entry name" value="DEOXYURIDINE 5'-TRIPHOSPHATE NUCLEOTIDOHYDROLASE"/>
    <property type="match status" value="1"/>
</dbReference>
<dbReference type="PANTHER" id="PTHR11241:SF0">
    <property type="entry name" value="DEOXYURIDINE 5'-TRIPHOSPHATE NUCLEOTIDOHYDROLASE"/>
    <property type="match status" value="1"/>
</dbReference>
<dbReference type="Pfam" id="PF00692">
    <property type="entry name" value="dUTPase"/>
    <property type="match status" value="1"/>
</dbReference>
<dbReference type="SUPFAM" id="SSF51283">
    <property type="entry name" value="dUTPase-like"/>
    <property type="match status" value="1"/>
</dbReference>
<name>DUT_BURL3</name>
<reference key="1">
    <citation type="submission" date="2005-10" db="EMBL/GenBank/DDBJ databases">
        <title>Complete sequence of chromosome 1 of Burkholderia sp. 383.</title>
        <authorList>
            <consortium name="US DOE Joint Genome Institute"/>
            <person name="Copeland A."/>
            <person name="Lucas S."/>
            <person name="Lapidus A."/>
            <person name="Barry K."/>
            <person name="Detter J.C."/>
            <person name="Glavina T."/>
            <person name="Hammon N."/>
            <person name="Israni S."/>
            <person name="Pitluck S."/>
            <person name="Chain P."/>
            <person name="Malfatti S."/>
            <person name="Shin M."/>
            <person name="Vergez L."/>
            <person name="Schmutz J."/>
            <person name="Larimer F."/>
            <person name="Land M."/>
            <person name="Kyrpides N."/>
            <person name="Lykidis A."/>
            <person name="Richardson P."/>
        </authorList>
    </citation>
    <scope>NUCLEOTIDE SEQUENCE [LARGE SCALE GENOMIC DNA]</scope>
    <source>
        <strain>ATCC 17760 / DSM 23089 / LMG 22485 / NCIMB 9086 / R18194 / 383</strain>
    </source>
</reference>
<sequence length="148" mass="15899">MKLDLKILDARMRDYLPAYATTGSAGLDLRACLDAPVTLQPGETTLVPTGLAIHLADPGYAALILPRSGLGHKHGIVLGNLVGLIDSDYQGQLMISTWNRGQTEFVLNPFERLAQLVIVPVVQAQFNIVDDFAESDRGDGGFGSTGRH</sequence>
<feature type="chain" id="PRO_0000231403" description="Deoxyuridine 5'-triphosphate nucleotidohydrolase">
    <location>
        <begin position="1"/>
        <end position="148"/>
    </location>
</feature>
<feature type="binding site" evidence="1">
    <location>
        <begin position="67"/>
        <end position="69"/>
    </location>
    <ligand>
        <name>substrate</name>
    </ligand>
</feature>
<feature type="binding site" evidence="1">
    <location>
        <position position="80"/>
    </location>
    <ligand>
        <name>substrate</name>
    </ligand>
</feature>
<feature type="binding site" evidence="1">
    <location>
        <begin position="84"/>
        <end position="86"/>
    </location>
    <ligand>
        <name>substrate</name>
    </ligand>
</feature>
<feature type="binding site" evidence="1">
    <location>
        <position position="94"/>
    </location>
    <ligand>
        <name>substrate</name>
    </ligand>
</feature>
<accession>Q39DM5</accession>
<protein>
    <recommendedName>
        <fullName evidence="1">Deoxyuridine 5'-triphosphate nucleotidohydrolase</fullName>
        <shortName evidence="1">dUTPase</shortName>
        <ecNumber evidence="1">3.6.1.23</ecNumber>
    </recommendedName>
    <alternativeName>
        <fullName evidence="1">dUTP pyrophosphatase</fullName>
    </alternativeName>
</protein>
<proteinExistence type="inferred from homology"/>
<organism>
    <name type="scientific">Burkholderia lata (strain ATCC 17760 / DSM 23089 / LMG 22485 / NCIMB 9086 / R18194 / 383)</name>
    <dbReference type="NCBI Taxonomy" id="482957"/>
    <lineage>
        <taxon>Bacteria</taxon>
        <taxon>Pseudomonadati</taxon>
        <taxon>Pseudomonadota</taxon>
        <taxon>Betaproteobacteria</taxon>
        <taxon>Burkholderiales</taxon>
        <taxon>Burkholderiaceae</taxon>
        <taxon>Burkholderia</taxon>
        <taxon>Burkholderia cepacia complex</taxon>
    </lineage>
</organism>
<evidence type="ECO:0000255" key="1">
    <source>
        <dbReference type="HAMAP-Rule" id="MF_00116"/>
    </source>
</evidence>
<comment type="function">
    <text evidence="1">This enzyme is involved in nucleotide metabolism: it produces dUMP, the immediate precursor of thymidine nucleotides and it decreases the intracellular concentration of dUTP so that uracil cannot be incorporated into DNA.</text>
</comment>
<comment type="catalytic activity">
    <reaction evidence="1">
        <text>dUTP + H2O = dUMP + diphosphate + H(+)</text>
        <dbReference type="Rhea" id="RHEA:10248"/>
        <dbReference type="ChEBI" id="CHEBI:15377"/>
        <dbReference type="ChEBI" id="CHEBI:15378"/>
        <dbReference type="ChEBI" id="CHEBI:33019"/>
        <dbReference type="ChEBI" id="CHEBI:61555"/>
        <dbReference type="ChEBI" id="CHEBI:246422"/>
        <dbReference type="EC" id="3.6.1.23"/>
    </reaction>
</comment>
<comment type="cofactor">
    <cofactor evidence="1">
        <name>Mg(2+)</name>
        <dbReference type="ChEBI" id="CHEBI:18420"/>
    </cofactor>
</comment>
<comment type="pathway">
    <text evidence="1">Pyrimidine metabolism; dUMP biosynthesis; dUMP from dCTP (dUTP route): step 2/2.</text>
</comment>
<comment type="similarity">
    <text evidence="1">Belongs to the dUTPase family.</text>
</comment>
<keyword id="KW-0378">Hydrolase</keyword>
<keyword id="KW-0460">Magnesium</keyword>
<keyword id="KW-0479">Metal-binding</keyword>
<keyword id="KW-0546">Nucleotide metabolism</keyword>
<gene>
    <name evidence="1" type="primary">dut</name>
    <name type="ordered locus">Bcep18194_A5847</name>
</gene>